<reference key="1">
    <citation type="journal article" date="2004" name="J. Infect. Dis.">
        <title>Progress toward characterization of the group A Streptococcus metagenome: complete genome sequence of a macrolide-resistant serotype M6 strain.</title>
        <authorList>
            <person name="Banks D.J."/>
            <person name="Porcella S.F."/>
            <person name="Barbian K.D."/>
            <person name="Beres S.B."/>
            <person name="Philips L.E."/>
            <person name="Voyich J.M."/>
            <person name="DeLeo F.R."/>
            <person name="Martin J.M."/>
            <person name="Somerville G.A."/>
            <person name="Musser J.M."/>
        </authorList>
    </citation>
    <scope>NUCLEOTIDE SEQUENCE [LARGE SCALE GENOMIC DNA]</scope>
    <source>
        <strain>ATCC BAA-946 / MGAS10394</strain>
    </source>
</reference>
<name>Y479_STRP6</name>
<accession>Q5XD99</accession>
<evidence type="ECO:0000305" key="1"/>
<organism>
    <name type="scientific">Streptococcus pyogenes serotype M6 (strain ATCC BAA-946 / MGAS10394)</name>
    <dbReference type="NCBI Taxonomy" id="286636"/>
    <lineage>
        <taxon>Bacteria</taxon>
        <taxon>Bacillati</taxon>
        <taxon>Bacillota</taxon>
        <taxon>Bacilli</taxon>
        <taxon>Lactobacillales</taxon>
        <taxon>Streptococcaceae</taxon>
        <taxon>Streptococcus</taxon>
    </lineage>
</organism>
<comment type="similarity">
    <text evidence="1">Belongs to the AdoMet synthetase 2 family.</text>
</comment>
<dbReference type="EMBL" id="CP000003">
    <property type="protein sequence ID" value="AAT86614.1"/>
    <property type="molecule type" value="Genomic_DNA"/>
</dbReference>
<dbReference type="RefSeq" id="WP_002985626.1">
    <property type="nucleotide sequence ID" value="NC_006086.1"/>
</dbReference>
<dbReference type="SMR" id="Q5XD99"/>
<dbReference type="KEGG" id="spa:M6_Spy0479"/>
<dbReference type="HOGENOM" id="CLU_057642_0_0_9"/>
<dbReference type="Proteomes" id="UP000001167">
    <property type="component" value="Chromosome"/>
</dbReference>
<dbReference type="Gene3D" id="3.30.300.10">
    <property type="match status" value="1"/>
</dbReference>
<dbReference type="Gene3D" id="3.30.300.280">
    <property type="entry name" value="S-adenosylmethionine synthetase, C-terminal domain"/>
    <property type="match status" value="1"/>
</dbReference>
<dbReference type="Gene3D" id="3.30.300.340">
    <property type="entry name" value="S-adenosylmethionine synthetase, N-terminal domain"/>
    <property type="match status" value="1"/>
</dbReference>
<dbReference type="InterPro" id="IPR042543">
    <property type="entry name" value="AdoMet_synthase_2"/>
</dbReference>
<dbReference type="InterPro" id="IPR027790">
    <property type="entry name" value="AdoMet_synthase_2_family"/>
</dbReference>
<dbReference type="InterPro" id="IPR042544">
    <property type="entry name" value="AdoMet_synthase_3"/>
</dbReference>
<dbReference type="NCBIfam" id="NF003362">
    <property type="entry name" value="PRK04439.1-1"/>
    <property type="match status" value="1"/>
</dbReference>
<dbReference type="PANTHER" id="PTHR36697">
    <property type="entry name" value="S-ADENOSYLMETHIONINE SYNTHASE"/>
    <property type="match status" value="1"/>
</dbReference>
<dbReference type="PANTHER" id="PTHR36697:SF1">
    <property type="entry name" value="S-ADENOSYLMETHIONINE SYNTHASE"/>
    <property type="match status" value="1"/>
</dbReference>
<dbReference type="Pfam" id="PF01941">
    <property type="entry name" value="AdoMet_Synthase"/>
    <property type="match status" value="1"/>
</dbReference>
<protein>
    <recommendedName>
        <fullName>Uncharacterized protein M6_Spy0479</fullName>
    </recommendedName>
</protein>
<feature type="chain" id="PRO_0000150048" description="Uncharacterized protein M6_Spy0479">
    <location>
        <begin position="1"/>
        <end position="399"/>
    </location>
</feature>
<sequence>MDLKITNGFYDPSHLSYEVVERKGLGHPDTLADGIAEQIEIDYSLYCLDKFGVIPHHNFDKIIIRGGHSVQDFGGSDFIEPIKIIFLGRASKKCFNSSIPLFKIQKKAATKYLNRILPNLDVENYVEFETLTSDFTTKTNWFSPEAIEDLPEYLDVPKANDTATMISYWPLTISEELALMIEGYFYKLDKNELPTPRFTKMGGDIKVMVVRNDLEYSIRINFPLISKFFNNDIESQLYVDKHVEKIKKYIEQKYKNISFSIDYHYYLTTTGSCIDFGEEGAVGRGNKTHGIISSFRPNTMEAPAGKNCTYFVGKVWGFLSDTIAKEIYEAFNTPCQIIMQLNIGSKLYRPTHLFIQTEESVDQERVLEIVNRHLNNGKQNTNLILSTQHFIPKTNVYDG</sequence>
<proteinExistence type="inferred from homology"/>
<gene>
    <name type="ordered locus">M6_Spy0479</name>
</gene>